<organism evidence="14">
    <name type="scientific">Caenorhabditis elegans</name>
    <dbReference type="NCBI Taxonomy" id="6239"/>
    <lineage>
        <taxon>Eukaryota</taxon>
        <taxon>Metazoa</taxon>
        <taxon>Ecdysozoa</taxon>
        <taxon>Nematoda</taxon>
        <taxon>Chromadorea</taxon>
        <taxon>Rhabditida</taxon>
        <taxon>Rhabditina</taxon>
        <taxon>Rhabditomorpha</taxon>
        <taxon>Rhabditoidea</taxon>
        <taxon>Rhabditidae</taxon>
        <taxon>Peloderinae</taxon>
        <taxon>Caenorhabditis</taxon>
    </lineage>
</organism>
<name>SEPA1_CAEEL</name>
<accession>G5EC37</accession>
<protein>
    <recommendedName>
        <fullName evidence="12">Protein sepa-1</fullName>
    </recommendedName>
    <alternativeName>
        <fullName evidence="15">Suppressor of ectopic P granules in autophagy</fullName>
    </alternativeName>
</protein>
<dbReference type="EMBL" id="BX284601">
    <property type="protein sequence ID" value="CAB07643.1"/>
    <property type="molecule type" value="Genomic_DNA"/>
</dbReference>
<dbReference type="PIR" id="T23651">
    <property type="entry name" value="T23651"/>
</dbReference>
<dbReference type="RefSeq" id="NP_493339.1">
    <property type="nucleotide sequence ID" value="NM_060938.4"/>
</dbReference>
<dbReference type="SMR" id="G5EC37"/>
<dbReference type="ELM" id="G5EC37"/>
<dbReference type="FunCoup" id="G5EC37">
    <property type="interactions" value="259"/>
</dbReference>
<dbReference type="IntAct" id="G5EC37">
    <property type="interactions" value="2"/>
</dbReference>
<dbReference type="STRING" id="6239.M01E5.6.1"/>
<dbReference type="PaxDb" id="6239-M01E5.6"/>
<dbReference type="PeptideAtlas" id="G5EC37"/>
<dbReference type="EnsemblMetazoa" id="M01E5.6.1">
    <property type="protein sequence ID" value="M01E5.6.1"/>
    <property type="gene ID" value="WBGene00010808"/>
</dbReference>
<dbReference type="GeneID" id="173196"/>
<dbReference type="KEGG" id="cel:CELE_M01E5.6"/>
<dbReference type="AGR" id="WB:WBGene00010808"/>
<dbReference type="CTD" id="173196"/>
<dbReference type="WormBase" id="M01E5.6">
    <property type="protein sequence ID" value="CE12286"/>
    <property type="gene ID" value="WBGene00010808"/>
    <property type="gene designation" value="sepa-1"/>
</dbReference>
<dbReference type="eggNOG" id="KOG1778">
    <property type="taxonomic scope" value="Eukaryota"/>
</dbReference>
<dbReference type="GeneTree" id="ENSGT00970000195870"/>
<dbReference type="HOGENOM" id="CLU_392902_0_0_1"/>
<dbReference type="InParanoid" id="G5EC37"/>
<dbReference type="OMA" id="NTSKEWI"/>
<dbReference type="OrthoDB" id="5911241at2759"/>
<dbReference type="PhylomeDB" id="G5EC37"/>
<dbReference type="CD-CODE" id="0F455885">
    <property type="entry name" value="Synthetic Condensate 000172"/>
</dbReference>
<dbReference type="CD-CODE" id="73A75392">
    <property type="entry name" value="P-granule"/>
</dbReference>
<dbReference type="CD-CODE" id="985E7A25">
    <property type="entry name" value="Synthetic Condensate 000077"/>
</dbReference>
<dbReference type="CD-CODE" id="A3406C3E">
    <property type="entry name" value="Synthetic Condensate 000146"/>
</dbReference>
<dbReference type="CD-CODE" id="D8841629">
    <property type="entry name" value="Synthetic Condensate 000136"/>
</dbReference>
<dbReference type="CD-CODE" id="F6300417">
    <property type="entry name" value="Synthetic Condensate 000082"/>
</dbReference>
<dbReference type="PRO" id="PR:G5EC37"/>
<dbReference type="Proteomes" id="UP000001940">
    <property type="component" value="Chromosome I"/>
</dbReference>
<dbReference type="Bgee" id="WBGene00010808">
    <property type="expression patterns" value="Expressed in embryo and 4 other cell types or tissues"/>
</dbReference>
<dbReference type="GO" id="GO:0005737">
    <property type="term" value="C:cytoplasm"/>
    <property type="evidence" value="ECO:0000314"/>
    <property type="project" value="WormBase"/>
</dbReference>
<dbReference type="GO" id="GO:0005634">
    <property type="term" value="C:nucleus"/>
    <property type="evidence" value="ECO:0007669"/>
    <property type="project" value="UniProtKB-SubCell"/>
</dbReference>
<dbReference type="GO" id="GO:0030674">
    <property type="term" value="F:protein-macromolecule adaptor activity"/>
    <property type="evidence" value="ECO:0000314"/>
    <property type="project" value="WormBase"/>
</dbReference>
<dbReference type="GO" id="GO:0003712">
    <property type="term" value="F:transcription coregulator activity"/>
    <property type="evidence" value="ECO:0007669"/>
    <property type="project" value="InterPro"/>
</dbReference>
<dbReference type="GO" id="GO:0006914">
    <property type="term" value="P:autophagy"/>
    <property type="evidence" value="ECO:0000315"/>
    <property type="project" value="WormBase"/>
</dbReference>
<dbReference type="GO" id="GO:0006355">
    <property type="term" value="P:regulation of DNA-templated transcription"/>
    <property type="evidence" value="ECO:0007669"/>
    <property type="project" value="InterPro"/>
</dbReference>
<dbReference type="Gene3D" id="1.10.246.20">
    <property type="entry name" value="Coactivator CBP, KIX domain"/>
    <property type="match status" value="1"/>
</dbReference>
<dbReference type="InterPro" id="IPR003101">
    <property type="entry name" value="KIX_dom"/>
</dbReference>
<dbReference type="InterPro" id="IPR036529">
    <property type="entry name" value="KIX_dom_sf"/>
</dbReference>
<dbReference type="InterPro" id="IPR039908">
    <property type="entry name" value="Sepa-1"/>
</dbReference>
<dbReference type="PANTHER" id="PTHR21504:SF1">
    <property type="entry name" value="IG-LIKE DOMAIN-CONTAINING PROTEIN-RELATED"/>
    <property type="match status" value="1"/>
</dbReference>
<dbReference type="PANTHER" id="PTHR21504">
    <property type="entry name" value="IG-LIKE DOMAIN-CONTAINING PROTEIN-RELATED-RELATED"/>
    <property type="match status" value="1"/>
</dbReference>
<dbReference type="Pfam" id="PF02172">
    <property type="entry name" value="KIX"/>
    <property type="match status" value="1"/>
</dbReference>
<dbReference type="SUPFAM" id="SSF47040">
    <property type="entry name" value="Kix domain of CBP (creb binding protein)"/>
    <property type="match status" value="1"/>
</dbReference>
<dbReference type="PROSITE" id="PS50952">
    <property type="entry name" value="KIX"/>
    <property type="match status" value="1"/>
</dbReference>
<proteinExistence type="evidence at protein level"/>
<feature type="chain" id="PRO_0000440173" description="Protein sepa-1" evidence="12">
    <location>
        <begin position="1"/>
        <end position="702"/>
    </location>
</feature>
<feature type="domain" description="KIX" evidence="2">
    <location>
        <begin position="597"/>
        <end position="674"/>
    </location>
</feature>
<feature type="region of interest" description="Required for self-association and interaction with pgl-3" evidence="4">
    <location>
        <begin position="39"/>
        <end position="160"/>
    </location>
</feature>
<feature type="region of interest" description="Disordered" evidence="3">
    <location>
        <begin position="450"/>
        <end position="471"/>
    </location>
</feature>
<feature type="region of interest" description="Disordered" evidence="3">
    <location>
        <begin position="545"/>
        <end position="564"/>
    </location>
</feature>
<feature type="region of interest" description="Disordered" evidence="3">
    <location>
        <begin position="675"/>
        <end position="702"/>
    </location>
</feature>
<feature type="coiled-coil region" evidence="1">
    <location>
        <begin position="508"/>
        <end position="543"/>
    </location>
</feature>
<feature type="short sequence motif" description="LIR 1" evidence="9">
    <location>
        <begin position="107"/>
        <end position="110"/>
    </location>
</feature>
<feature type="short sequence motif" description="LIR 2" evidence="9 13">
    <location>
        <begin position="247"/>
        <end position="250"/>
    </location>
</feature>
<feature type="short sequence motif" description="LIR 3" evidence="9 13">
    <location>
        <begin position="298"/>
        <end position="301"/>
    </location>
</feature>
<feature type="short sequence motif" description="LIR 4" evidence="9 13">
    <location>
        <begin position="469"/>
        <end position="472"/>
    </location>
</feature>
<feature type="compositionally biased region" description="Polar residues" evidence="3">
    <location>
        <begin position="458"/>
        <end position="468"/>
    </location>
</feature>
<feature type="compositionally biased region" description="Basic and acidic residues" evidence="3">
    <location>
        <begin position="675"/>
        <end position="685"/>
    </location>
</feature>
<feature type="site" description="Required for interaction with lgg-1 and lgg-2" evidence="9">
    <location>
        <position position="105"/>
    </location>
</feature>
<feature type="site" description="Required for interaction with lgg-1 and lgg-2" evidence="9">
    <location>
        <position position="246"/>
    </location>
</feature>
<feature type="mutagenesis site" description="Impairs interaction with lgg-1 and lgg-2." evidence="9">
    <original>D</original>
    <variation>K</variation>
    <location>
        <position position="105"/>
    </location>
</feature>
<feature type="mutagenesis site" description="Impairs interaction with lgg-1 and lgg-2." evidence="9">
    <original>F</original>
    <variation>A</variation>
    <location>
        <position position="107"/>
    </location>
</feature>
<feature type="mutagenesis site" description="Impairs interaction with lgg-1 and lgg-2." evidence="9">
    <original>E</original>
    <variation>K</variation>
    <location>
        <position position="109"/>
    </location>
</feature>
<feature type="mutagenesis site" description="Impairs interaction with lgg-1 and lgg-2." evidence="9">
    <original>V</original>
    <variation>A</variation>
    <location>
        <position position="110"/>
    </location>
</feature>
<feature type="mutagenesis site" description="Abolishes the interaction with lgg-1 and lgg-2." evidence="9">
    <original>DFQKI</original>
    <variation>KAQKA</variation>
    <variation>DAQKI</variation>
    <variation>DFQKA</variation>
    <variation>KFQKI</variation>
    <location>
        <begin position="246"/>
        <end position="250"/>
    </location>
</feature>
<feature type="mutagenesis site" description="In bp400; mutant protein does not form aggregates, but cytoplasmic localization is diffuse throughout embryogenesis." evidence="4">
    <original>C</original>
    <variation>Y</variation>
    <location>
        <position position="255"/>
    </location>
</feature>
<feature type="mutagenesis site" description="In bp401; temperature sensitive with the mutant protein forming 'speckles' at 15 degrees Celsius and diffusely localized at 25 degrees Celsius." evidence="4">
    <original>E</original>
    <variation>K</variation>
    <location>
        <position position="275"/>
    </location>
</feature>
<feature type="mutagenesis site" description="Abolishes the interaction with lgg-1 and lgg-2." evidence="9">
    <original>F</original>
    <variation>A</variation>
    <location>
        <position position="298"/>
    </location>
</feature>
<feature type="mutagenesis site" description="Abolishes the interaction with lgg-1." evidence="9">
    <original>YQEL</original>
    <variation>AQRA</variation>
    <location>
        <begin position="469"/>
        <end position="472"/>
    </location>
</feature>
<reference evidence="14" key="1">
    <citation type="journal article" date="1998" name="Science">
        <title>Genome sequence of the nematode C. elegans: a platform for investigating biology.</title>
        <authorList>
            <consortium name="The C. elegans sequencing consortium"/>
        </authorList>
    </citation>
    <scope>NUCLEOTIDE SEQUENCE [LARGE SCALE GENOMIC DNA]</scope>
    <source>
        <strain evidence="14">Bristol N2</strain>
    </source>
</reference>
<reference evidence="12" key="2">
    <citation type="journal article" date="2009" name="Autophagy">
        <title>epg-1 functions in autophagy-regulated processes and may encode a highly divergent Atg13 homolog in C. elegans.</title>
        <authorList>
            <person name="Tian E."/>
            <person name="Wang F."/>
            <person name="Han J."/>
            <person name="Zhang H."/>
        </authorList>
    </citation>
    <scope>FUNCTION</scope>
    <scope>DEVELOPMENTAL STAGE</scope>
</reference>
<reference evidence="12" key="3">
    <citation type="journal article" date="2009" name="Autophagy">
        <title>Selective autophagic degradation of maternally-loaded germline P granule components in somatic cells during C. elegans embryogenesis.</title>
        <authorList>
            <person name="Zhao Y."/>
            <person name="Tian E."/>
            <person name="Zhang H."/>
        </authorList>
    </citation>
    <scope>FUNCTION</scope>
    <scope>SUBCELLULAR LOCATION</scope>
</reference>
<reference evidence="12" key="4">
    <citation type="journal article" date="2009" name="Cell">
        <title>SEPA-1 mediates the specific recognition and degradation of P granule components by autophagy in C. elegans.</title>
        <authorList>
            <person name="Zhang Y."/>
            <person name="Yan L."/>
            <person name="Zhou Z."/>
            <person name="Yang P."/>
            <person name="Tian E."/>
            <person name="Zhang K."/>
            <person name="Zhao Y."/>
            <person name="Li Z."/>
            <person name="Song B."/>
            <person name="Han J."/>
            <person name="Miao L."/>
            <person name="Zhang H."/>
        </authorList>
    </citation>
    <scope>FUNCTION</scope>
    <scope>SUBUNIT</scope>
    <scope>INTERACTION WITH LGG-1 AND PGL-3</scope>
    <scope>SUBCELLULAR LOCATION</scope>
    <scope>DEVELOPMENTAL STAGE</scope>
    <scope>PROTEOLYTIC DEGRADATION</scope>
    <scope>DISRUPTION PHENOTYPE</scope>
    <scope>MUTAGENESIS OF CYS-255 AND GLU-275</scope>
</reference>
<reference evidence="12" key="5">
    <citation type="journal article" date="2011" name="Dev. Cell">
        <title>The WD40 repeat PtdIns(3)P-binding protein EPG-6 regulates progression of omegasomes to autophagosomes.</title>
        <authorList>
            <person name="Lu Q."/>
            <person name="Yang P."/>
            <person name="Huang X."/>
            <person name="Hu W."/>
            <person name="Guo B."/>
            <person name="Wu F."/>
            <person name="Lin L."/>
            <person name="Kovacs A.L."/>
            <person name="Yu L."/>
            <person name="Zhang H."/>
        </authorList>
    </citation>
    <scope>SUBCELLULAR LOCATION</scope>
    <scope>DEVELOPMENTAL STAGE</scope>
</reference>
<reference evidence="12" key="6">
    <citation type="journal article" date="2013" name="Mol. Cell">
        <title>Arginine methylation modulates autophagic degradation of PGL granules in C. elegans.</title>
        <authorList>
            <person name="Li S."/>
            <person name="Yang P."/>
            <person name="Tian E."/>
            <person name="Zhang H."/>
        </authorList>
    </citation>
    <scope>FUNCTION</scope>
    <scope>INTERACTION WITH EPG-2 AND PGL-3</scope>
    <scope>SUBCELLULAR LOCATION</scope>
    <scope>DEVELOPMENTAL STAGE</scope>
    <scope>DISRUPTION PHENOTYPE</scope>
</reference>
<reference key="7">
    <citation type="journal article" date="2015" name="Mol. Cell">
        <title>Structural Basis of the Differential Function of the Two C. elegans Atg8 Homologs, LGG-1 and LGG-2, in Autophagy.</title>
        <authorList>
            <person name="Wu F."/>
            <person name="Watanabe Y."/>
            <person name="Guo X.Y."/>
            <person name="Qi X."/>
            <person name="Wang P."/>
            <person name="Zhao H.Y."/>
            <person name="Wang Z."/>
            <person name="Fujioka Y."/>
            <person name="Zhang H."/>
            <person name="Ren J.Q."/>
            <person name="Fang T.C."/>
            <person name="Shen Y.X."/>
            <person name="Feng W."/>
            <person name="Hu J.J."/>
            <person name="Noda N.N."/>
            <person name="Zhang H."/>
        </authorList>
    </citation>
    <scope>INTERACTION WITH LGG-1 AND LGG-2</scope>
    <scope>DOMAIN LIR MOTIF</scope>
    <scope>MUTAGENESIS OF ASP-105; PHE-107; GLU-109; VAL-110; 246-ASP--ILE-250; PHE-298 AND 469-TYR--LEU-472</scope>
</reference>
<reference key="8">
    <citation type="journal article" date="2017" name="Autophagy">
        <title>The composition of a protein aggregate modulates the specificity and efficiency of its autophagic degradation.</title>
        <authorList>
            <person name="Zhang G."/>
            <person name="Lin L."/>
            <person name="Qi D."/>
            <person name="Zhang H."/>
        </authorList>
    </citation>
    <scope>FUNCTION</scope>
    <scope>INTERACTION WITH EPG-2</scope>
</reference>
<comment type="function">
    <text evidence="4 5 6 8 10">Adapter protein that connects P-granules in somatic cells with the autophagic machinery (PubMed:19167332, PubMed:19372764, PubMed:19377305, PubMed:24140420). Association with other adapters such as epg-2 and P-granule components such as pgl-3 is required for the accumulation and degradation of P-granules by autophagy in somatic cells (PubMed:19167332, PubMed:19372764, PubMed:24140420, PubMed:28806108). This ensures exclusive localization of the P-granules in germ cells (PubMed:19167332, PubMed:19372764, PubMed:24140420, PubMed:28806108).</text>
</comment>
<comment type="subunit">
    <text evidence="4 8 9 10">Self-associates (PubMed:19167332). Interacts (via the LIR motifs) with lgg-1; the interaction is direct (PubMed:19167332, PubMed:26687600). Interacts (via the LIR motifs) with lgg-2; the interaction is direct (PubMed:26687600). Interacts with pgl-3; interaction is enhanced in the presence of RNA (PubMed:19167332, PubMed:24140420). Interacts with epg-2; may be modulated by prmt-1 (PubMed:24140420, PubMed:28806108).</text>
</comment>
<comment type="interaction">
    <interactant intactId="EBI-2256317">
        <id>G5EC37</id>
    </interactant>
    <interactant intactId="EBI-325374">
        <id>Q09490</id>
        <label>lgg-1</label>
    </interactant>
    <organismsDiffer>false</organismsDiffer>
    <experiments>3</experiments>
</comment>
<comment type="interaction">
    <interactant intactId="EBI-2256317">
        <id>G5EC37</id>
    </interactant>
    <interactant intactId="EBI-328338">
        <id>G5EBV6</id>
        <label>pgl-3</label>
    </interactant>
    <organismsDiffer>false</organismsDiffer>
    <experiments>5</experiments>
</comment>
<comment type="subcellular location">
    <subcellularLocation>
        <location evidence="2">Nucleus</location>
    </subcellularLocation>
    <subcellularLocation>
        <location evidence="4 5 7 8">Cytoplasm</location>
    </subcellularLocation>
    <subcellularLocation>
        <location evidence="13">Cytoplasmic granule</location>
    </subcellularLocation>
    <text evidence="4 7 8">Diffuse cytoplasmic localization, but also localized to cytoplasmic aggregates throughout development (PubMed:19167332, PubMed:21802374). Co-localizes with epg-2 and lgg-1 in cytoplasmic aggregates (PubMed:19167332, PubMed:24140420).</text>
</comment>
<comment type="developmental stage">
    <text evidence="4 6 7 8">First expressed in 16-cell stage embryos (PubMed:19167332). Temporal expression during embryogenesis with high expression as embryos develop into 100-stage embryos, but with low expression in most cells at the comma stage and almost diminished expression at the 2-fold stage of embryogenesis (PubMed:19167332, PubMed:19377305, PubMed:21802374, PubMed:24140420). Expressed in the head, tail and intestine, especially in the anterior and posterior intestinal cells, of larvae (PubMed:19167332).</text>
</comment>
<comment type="domain">
    <text evidence="9">The LIR motifs (LC3-interacting region) are required for its interaction with lgg-1 and lgg-2.</text>
</comment>
<comment type="PTM">
    <text evidence="4">Degraded by autophagy.</text>
</comment>
<comment type="disruption phenotype">
    <text evidence="4 8">RNAi-mediated knockdown results in the accumulation of cytoplasmic aggregates containing the P-granule component pgl-3 (PubMed:24140420). RNAi-mediated knockdown results in the disrupted formation of P-granules in an atg-18 autophagy mutant background (PubMed:19167332).</text>
</comment>
<gene>
    <name evidence="11 15" type="primary">sepa-1</name>
    <name evidence="15" type="ORF">M01E5.6</name>
</gene>
<keyword id="KW-0175">Coiled coil</keyword>
<keyword id="KW-0963">Cytoplasm</keyword>
<keyword id="KW-0539">Nucleus</keyword>
<keyword id="KW-1185">Reference proteome</keyword>
<sequence length="702" mass="80262">MTPLSALTSNPAPSPPPKFALGKCPATAIHVVSVLRPNRQRFCYEKTDAGDLIPHKCLICQPILTEKHISPYYAVYSDLLEDFVLFGYNTMTGKMEQFIYAFKTDCFVEVNRPEIKYNPAFLVKGNVVVALNGPEGELVVIERDCRGLLSKESTSYGQFRTLPTAALRTLTLQDLERDRWDRAANSDEVKISSGNESFDRLYAEYQKNLPRFQVRQCLHLNKEFLCVYSKTSGDYTRLEYIDETGDFQKISCTLCTCEVTESNLIPLYVERNASELVIHVHNTENNQIEQYIYDVRTFGFVQVKRNLVYDPKKITSGLNLFMAENIDNRKVYMIMRGRDGRLQKETSGSGGFEKMQPVAVKTFQVQWVEMKTEFEKKKASTERVEPQHPVQTEGEDIMETVLAMVESFNCDLRKELGLTQDQEIPRKAPRVESAETEENIVKNLEKLQIAKDPEEPTTAASEGGNTYGYQELDDTMSEGLLEKEAESKHQDANEPEPVKNVTYEPDVAAMDKKKKRRELKSRLNKINAQIDELEKRRMERAGKKQVVSSSVPSEEAAQVEAPASPALAENTNQISNEETPKIDIFEGYNGSFLFGTNTSKEWIVEDIRNHMVGKLLKAFWPRIQNVEEMNGELFKKLIANARKCETEILEASNDRDEYYRLMQLTVDQILKKTLKKDQRATEHNHQQPTQSSDELAKNHEKN</sequence>
<evidence type="ECO:0000255" key="1"/>
<evidence type="ECO:0000255" key="2">
    <source>
        <dbReference type="PROSITE-ProRule" id="PRU00311"/>
    </source>
</evidence>
<evidence type="ECO:0000256" key="3">
    <source>
        <dbReference type="SAM" id="MobiDB-lite"/>
    </source>
</evidence>
<evidence type="ECO:0000269" key="4">
    <source>
    </source>
</evidence>
<evidence type="ECO:0000269" key="5">
    <source>
    </source>
</evidence>
<evidence type="ECO:0000269" key="6">
    <source>
    </source>
</evidence>
<evidence type="ECO:0000269" key="7">
    <source>
    </source>
</evidence>
<evidence type="ECO:0000269" key="8">
    <source>
    </source>
</evidence>
<evidence type="ECO:0000269" key="9">
    <source>
    </source>
</evidence>
<evidence type="ECO:0000269" key="10">
    <source>
    </source>
</evidence>
<evidence type="ECO:0000303" key="11">
    <source>
    </source>
</evidence>
<evidence type="ECO:0000305" key="12"/>
<evidence type="ECO:0000305" key="13">
    <source>
    </source>
</evidence>
<evidence type="ECO:0000312" key="14">
    <source>
        <dbReference type="Proteomes" id="UP000001940"/>
    </source>
</evidence>
<evidence type="ECO:0000312" key="15">
    <source>
        <dbReference type="WormBase" id="M01E5.6"/>
    </source>
</evidence>